<reference key="1">
    <citation type="journal article" date="1994" name="Gene">
        <title>The pectin lyase-encoding gene (pnl) family from Glomerella cingulata: characterization of pnlA and its expression in yeast.</title>
        <authorList>
            <person name="Templeton M.D."/>
            <person name="Sharrock K.R."/>
            <person name="Bowen J.K."/>
            <person name="Crowhurst R.N."/>
            <person name="Rikkerink E.H."/>
        </authorList>
    </citation>
    <scope>NUCLEOTIDE SEQUENCE [GENOMIC DNA]</scope>
</reference>
<accession>Q00374</accession>
<dbReference type="EC" id="4.2.2.10"/>
<dbReference type="EMBL" id="L22857">
    <property type="protein sequence ID" value="AAA21817.1"/>
    <property type="molecule type" value="Genomic_DNA"/>
</dbReference>
<dbReference type="SMR" id="Q00374"/>
<dbReference type="CAZy" id="PL1">
    <property type="family name" value="Polysaccharide Lyase Family 1"/>
</dbReference>
<dbReference type="GlyCosmos" id="Q00374">
    <property type="glycosylation" value="1 site, No reported glycans"/>
</dbReference>
<dbReference type="GO" id="GO:0005576">
    <property type="term" value="C:extracellular region"/>
    <property type="evidence" value="ECO:0007669"/>
    <property type="project" value="UniProtKB-SubCell"/>
</dbReference>
<dbReference type="GO" id="GO:0030570">
    <property type="term" value="F:pectate lyase activity"/>
    <property type="evidence" value="ECO:0007669"/>
    <property type="project" value="InterPro"/>
</dbReference>
<dbReference type="GO" id="GO:0047490">
    <property type="term" value="F:pectin lyase activity"/>
    <property type="evidence" value="ECO:0007669"/>
    <property type="project" value="UniProtKB-EC"/>
</dbReference>
<dbReference type="FunFam" id="2.160.20.10:FF:000003">
    <property type="entry name" value="Pectin lyase F"/>
    <property type="match status" value="1"/>
</dbReference>
<dbReference type="Gene3D" id="2.160.20.10">
    <property type="entry name" value="Single-stranded right-handed beta-helix, Pectin lyase-like"/>
    <property type="match status" value="1"/>
</dbReference>
<dbReference type="InterPro" id="IPR002022">
    <property type="entry name" value="Pec_lyase"/>
</dbReference>
<dbReference type="InterPro" id="IPR012334">
    <property type="entry name" value="Pectin_lyas_fold"/>
</dbReference>
<dbReference type="InterPro" id="IPR011050">
    <property type="entry name" value="Pectin_lyase_fold/virulence"/>
</dbReference>
<dbReference type="InterPro" id="IPR045032">
    <property type="entry name" value="PEL"/>
</dbReference>
<dbReference type="PANTHER" id="PTHR31683">
    <property type="entry name" value="PECTATE LYASE 18-RELATED"/>
    <property type="match status" value="1"/>
</dbReference>
<dbReference type="PANTHER" id="PTHR31683:SF16">
    <property type="entry name" value="PECTIN LYASE A-RELATED"/>
    <property type="match status" value="1"/>
</dbReference>
<dbReference type="Pfam" id="PF00544">
    <property type="entry name" value="Pectate_lyase_4"/>
    <property type="match status" value="1"/>
</dbReference>
<dbReference type="SMART" id="SM00656">
    <property type="entry name" value="Amb_all"/>
    <property type="match status" value="1"/>
</dbReference>
<dbReference type="SUPFAM" id="SSF51126">
    <property type="entry name" value="Pectin lyase-like"/>
    <property type="match status" value="1"/>
</dbReference>
<sequence>MRSASILSAALAAFAPLASAADAVSGAAEGFAKGVTGGGSATPVYPSTTAELASYLKDSSARVIVLTKTFDFTGTEGTTTETGCAPYGTAAACQVAINKDNWCTNYQPNAPKVSVSYDKAPFNPLIVGSNKSLIGQGSKGVIKGKGLRITNSAKNVIIQNIHITNLNPKYVWGGDAISLDGTDLVWFDHVKTSLIGRQHIVLGNGASNRVTISNNEIDGSTSWSATCDNHHYWGVYLTGSNDMVTFSKNYIHHTSGRSPKIAGNSLVHISGNYFYANSGHAMEADAGAKVVLEGNVFQNVVAAMQSGLAGKVFSSPDANTNAQCSSYLGHTCQLNAYGSSGSLSGSDTSILSSFSGKNVAATVTANDAKNVPNTAGFGKI</sequence>
<name>PELA_COLGL</name>
<organism>
    <name type="scientific">Colletotrichum gloeosporioides</name>
    <name type="common">Anthracnose fungus</name>
    <name type="synonym">Glomerella cingulata</name>
    <dbReference type="NCBI Taxonomy" id="474922"/>
    <lineage>
        <taxon>Eukaryota</taxon>
        <taxon>Fungi</taxon>
        <taxon>Dikarya</taxon>
        <taxon>Ascomycota</taxon>
        <taxon>Pezizomycotina</taxon>
        <taxon>Sordariomycetes</taxon>
        <taxon>Hypocreomycetidae</taxon>
        <taxon>Glomerellales</taxon>
        <taxon>Glomerellaceae</taxon>
        <taxon>Colletotrichum</taxon>
        <taxon>Colletotrichum gloeosporioides species complex</taxon>
    </lineage>
</organism>
<evidence type="ECO:0000255" key="1"/>
<evidence type="ECO:0000305" key="2"/>
<keyword id="KW-0325">Glycoprotein</keyword>
<keyword id="KW-0456">Lyase</keyword>
<keyword id="KW-0964">Secreted</keyword>
<keyword id="KW-0732">Signal</keyword>
<feature type="signal peptide" evidence="1">
    <location>
        <begin position="1"/>
        <end position="20"/>
    </location>
</feature>
<feature type="chain" id="PRO_0000024899" description="Pectin lyase">
    <location>
        <begin position="21"/>
        <end position="380"/>
    </location>
</feature>
<feature type="glycosylation site" description="N-linked (GlcNAc...) asparagine" evidence="1">
    <location>
        <position position="130"/>
    </location>
</feature>
<protein>
    <recommendedName>
        <fullName>Pectin lyase</fullName>
        <ecNumber>4.2.2.10</ecNumber>
    </recommendedName>
</protein>
<gene>
    <name type="primary">PNLA</name>
</gene>
<proteinExistence type="inferred from homology"/>
<comment type="catalytic activity">
    <reaction>
        <text>Eliminative cleavage of (1-&gt;4)-alpha-D-galacturonan methyl ester to give oligosaccharides with 4-deoxy-6-O-methyl-alpha-D-galact-4-enuronosyl groups at their non-reducing ends.</text>
        <dbReference type="EC" id="4.2.2.10"/>
    </reaction>
</comment>
<comment type="subcellular location">
    <subcellularLocation>
        <location evidence="2">Secreted</location>
    </subcellularLocation>
</comment>
<comment type="similarity">
    <text evidence="2">Belongs to the polysaccharide lyase 1 family.</text>
</comment>